<feature type="chain" id="PRO_0000129642" description="Large ribosomal subunit protein uL2">
    <location>
        <begin position="1"/>
        <end position="275"/>
    </location>
</feature>
<feature type="region of interest" description="Disordered" evidence="2">
    <location>
        <begin position="224"/>
        <end position="275"/>
    </location>
</feature>
<feature type="compositionally biased region" description="Basic and acidic residues" evidence="2">
    <location>
        <begin position="264"/>
        <end position="275"/>
    </location>
</feature>
<reference key="1">
    <citation type="journal article" date="2002" name="Genome Res.">
        <title>A complete sequence of the T. tengcongensis genome.</title>
        <authorList>
            <person name="Bao Q."/>
            <person name="Tian Y."/>
            <person name="Li W."/>
            <person name="Xu Z."/>
            <person name="Xuan Z."/>
            <person name="Hu S."/>
            <person name="Dong W."/>
            <person name="Yang J."/>
            <person name="Chen Y."/>
            <person name="Xue Y."/>
            <person name="Xu Y."/>
            <person name="Lai X."/>
            <person name="Huang L."/>
            <person name="Dong X."/>
            <person name="Ma Y."/>
            <person name="Ling L."/>
            <person name="Tan H."/>
            <person name="Chen R."/>
            <person name="Wang J."/>
            <person name="Yu J."/>
            <person name="Yang H."/>
        </authorList>
    </citation>
    <scope>NUCLEOTIDE SEQUENCE [LARGE SCALE GENOMIC DNA]</scope>
    <source>
        <strain>DSM 15242 / JCM 11007 / NBRC 100824 / MB4</strain>
    </source>
</reference>
<name>RL2_CALS4</name>
<evidence type="ECO:0000255" key="1">
    <source>
        <dbReference type="HAMAP-Rule" id="MF_01320"/>
    </source>
</evidence>
<evidence type="ECO:0000256" key="2">
    <source>
        <dbReference type="SAM" id="MobiDB-lite"/>
    </source>
</evidence>
<evidence type="ECO:0000305" key="3"/>
<gene>
    <name evidence="1" type="primary">rplB</name>
    <name type="ordered locus">TTE2290</name>
</gene>
<organism>
    <name type="scientific">Caldanaerobacter subterraneus subsp. tengcongensis (strain DSM 15242 / JCM 11007 / NBRC 100824 / MB4)</name>
    <name type="common">Thermoanaerobacter tengcongensis</name>
    <dbReference type="NCBI Taxonomy" id="273068"/>
    <lineage>
        <taxon>Bacteria</taxon>
        <taxon>Bacillati</taxon>
        <taxon>Bacillota</taxon>
        <taxon>Clostridia</taxon>
        <taxon>Thermoanaerobacterales</taxon>
        <taxon>Thermoanaerobacteraceae</taxon>
        <taxon>Caldanaerobacter</taxon>
    </lineage>
</organism>
<sequence length="275" mass="30048">MGIKAYKPTSPGRRQMTVLTFEEITKKEPEKSLLAPLTKKAGRNVYGRITVRHRGGGHKRRYRIIDFKRDKDGIPGKVAAIEYDPNRTAFIALIHYADGEKRYIIAPHGLKVGDIVESGENVDIKVGNALPLRNIPVGTIVHNIELIPGKGGQLVRAAGAAAQLMAKEGDYVHIRMPSGEIRLINANCRATIGQVSNIDHENVKIGKAGRSRWLGIRPTVRGSAMNPVDHPHGGGEGKAPIGHPGPLTPWGKPALGYKTRKKGKASDKFIVKRRK</sequence>
<accession>Q8R7V7</accession>
<protein>
    <recommendedName>
        <fullName evidence="1">Large ribosomal subunit protein uL2</fullName>
    </recommendedName>
    <alternativeName>
        <fullName evidence="3">50S ribosomal protein L2</fullName>
    </alternativeName>
</protein>
<comment type="function">
    <text evidence="1">One of the primary rRNA binding proteins. Required for association of the 30S and 50S subunits to form the 70S ribosome, for tRNA binding and peptide bond formation. It has been suggested to have peptidyltransferase activity; this is somewhat controversial. Makes several contacts with the 16S rRNA in the 70S ribosome.</text>
</comment>
<comment type="subunit">
    <text evidence="1">Part of the 50S ribosomal subunit. Forms a bridge to the 30S subunit in the 70S ribosome.</text>
</comment>
<comment type="similarity">
    <text evidence="1">Belongs to the universal ribosomal protein uL2 family.</text>
</comment>
<dbReference type="EMBL" id="AE008691">
    <property type="protein sequence ID" value="AAM25432.1"/>
    <property type="molecule type" value="Genomic_DNA"/>
</dbReference>
<dbReference type="RefSeq" id="WP_011026335.1">
    <property type="nucleotide sequence ID" value="NC_003869.1"/>
</dbReference>
<dbReference type="SMR" id="Q8R7V7"/>
<dbReference type="STRING" id="273068.TTE2290"/>
<dbReference type="KEGG" id="tte:TTE2290"/>
<dbReference type="eggNOG" id="COG0090">
    <property type="taxonomic scope" value="Bacteria"/>
</dbReference>
<dbReference type="HOGENOM" id="CLU_036235_2_1_9"/>
<dbReference type="OrthoDB" id="9778722at2"/>
<dbReference type="Proteomes" id="UP000000555">
    <property type="component" value="Chromosome"/>
</dbReference>
<dbReference type="GO" id="GO:0015934">
    <property type="term" value="C:large ribosomal subunit"/>
    <property type="evidence" value="ECO:0007669"/>
    <property type="project" value="InterPro"/>
</dbReference>
<dbReference type="GO" id="GO:0019843">
    <property type="term" value="F:rRNA binding"/>
    <property type="evidence" value="ECO:0007669"/>
    <property type="project" value="UniProtKB-UniRule"/>
</dbReference>
<dbReference type="GO" id="GO:0003735">
    <property type="term" value="F:structural constituent of ribosome"/>
    <property type="evidence" value="ECO:0007669"/>
    <property type="project" value="InterPro"/>
</dbReference>
<dbReference type="GO" id="GO:0016740">
    <property type="term" value="F:transferase activity"/>
    <property type="evidence" value="ECO:0007669"/>
    <property type="project" value="InterPro"/>
</dbReference>
<dbReference type="GO" id="GO:0002181">
    <property type="term" value="P:cytoplasmic translation"/>
    <property type="evidence" value="ECO:0007669"/>
    <property type="project" value="TreeGrafter"/>
</dbReference>
<dbReference type="FunFam" id="2.30.30.30:FF:000001">
    <property type="entry name" value="50S ribosomal protein L2"/>
    <property type="match status" value="1"/>
</dbReference>
<dbReference type="FunFam" id="2.40.50.140:FF:000003">
    <property type="entry name" value="50S ribosomal protein L2"/>
    <property type="match status" value="1"/>
</dbReference>
<dbReference type="FunFam" id="4.10.950.10:FF:000001">
    <property type="entry name" value="50S ribosomal protein L2"/>
    <property type="match status" value="1"/>
</dbReference>
<dbReference type="Gene3D" id="2.30.30.30">
    <property type="match status" value="1"/>
</dbReference>
<dbReference type="Gene3D" id="2.40.50.140">
    <property type="entry name" value="Nucleic acid-binding proteins"/>
    <property type="match status" value="1"/>
</dbReference>
<dbReference type="Gene3D" id="4.10.950.10">
    <property type="entry name" value="Ribosomal protein L2, domain 3"/>
    <property type="match status" value="1"/>
</dbReference>
<dbReference type="HAMAP" id="MF_01320_B">
    <property type="entry name" value="Ribosomal_uL2_B"/>
    <property type="match status" value="1"/>
</dbReference>
<dbReference type="InterPro" id="IPR012340">
    <property type="entry name" value="NA-bd_OB-fold"/>
</dbReference>
<dbReference type="InterPro" id="IPR014722">
    <property type="entry name" value="Rib_uL2_dom2"/>
</dbReference>
<dbReference type="InterPro" id="IPR002171">
    <property type="entry name" value="Ribosomal_uL2"/>
</dbReference>
<dbReference type="InterPro" id="IPR005880">
    <property type="entry name" value="Ribosomal_uL2_bac/org-type"/>
</dbReference>
<dbReference type="InterPro" id="IPR022669">
    <property type="entry name" value="Ribosomal_uL2_C"/>
</dbReference>
<dbReference type="InterPro" id="IPR022671">
    <property type="entry name" value="Ribosomal_uL2_CS"/>
</dbReference>
<dbReference type="InterPro" id="IPR014726">
    <property type="entry name" value="Ribosomal_uL2_dom3"/>
</dbReference>
<dbReference type="InterPro" id="IPR022666">
    <property type="entry name" value="Ribosomal_uL2_RNA-bd_dom"/>
</dbReference>
<dbReference type="InterPro" id="IPR008991">
    <property type="entry name" value="Translation_prot_SH3-like_sf"/>
</dbReference>
<dbReference type="NCBIfam" id="TIGR01171">
    <property type="entry name" value="rplB_bact"/>
    <property type="match status" value="1"/>
</dbReference>
<dbReference type="PANTHER" id="PTHR13691:SF5">
    <property type="entry name" value="LARGE RIBOSOMAL SUBUNIT PROTEIN UL2M"/>
    <property type="match status" value="1"/>
</dbReference>
<dbReference type="PANTHER" id="PTHR13691">
    <property type="entry name" value="RIBOSOMAL PROTEIN L2"/>
    <property type="match status" value="1"/>
</dbReference>
<dbReference type="Pfam" id="PF00181">
    <property type="entry name" value="Ribosomal_L2"/>
    <property type="match status" value="1"/>
</dbReference>
<dbReference type="Pfam" id="PF03947">
    <property type="entry name" value="Ribosomal_L2_C"/>
    <property type="match status" value="1"/>
</dbReference>
<dbReference type="PIRSF" id="PIRSF002158">
    <property type="entry name" value="Ribosomal_L2"/>
    <property type="match status" value="1"/>
</dbReference>
<dbReference type="SMART" id="SM01383">
    <property type="entry name" value="Ribosomal_L2"/>
    <property type="match status" value="1"/>
</dbReference>
<dbReference type="SMART" id="SM01382">
    <property type="entry name" value="Ribosomal_L2_C"/>
    <property type="match status" value="1"/>
</dbReference>
<dbReference type="SUPFAM" id="SSF50249">
    <property type="entry name" value="Nucleic acid-binding proteins"/>
    <property type="match status" value="1"/>
</dbReference>
<dbReference type="SUPFAM" id="SSF50104">
    <property type="entry name" value="Translation proteins SH3-like domain"/>
    <property type="match status" value="1"/>
</dbReference>
<dbReference type="PROSITE" id="PS00467">
    <property type="entry name" value="RIBOSOMAL_L2"/>
    <property type="match status" value="1"/>
</dbReference>
<proteinExistence type="inferred from homology"/>
<keyword id="KW-1185">Reference proteome</keyword>
<keyword id="KW-0687">Ribonucleoprotein</keyword>
<keyword id="KW-0689">Ribosomal protein</keyword>
<keyword id="KW-0694">RNA-binding</keyword>
<keyword id="KW-0699">rRNA-binding</keyword>